<proteinExistence type="evidence at transcript level"/>
<comment type="function">
    <text evidence="1">RuBisCO catalyzes two reactions: the carboxylation of D-ribulose 1,5-bisphosphate, the primary event in carbon dioxide fixation, as well as the oxidative fragmentation of the pentose substrate. Both reactions occur simultaneously and in competition at the same active site. Although the small subunit is not catalytic it is essential for maximal activity.</text>
</comment>
<comment type="subunit">
    <text evidence="1">Heterohexadecamer of 8 large and 8 small subunits.</text>
</comment>
<comment type="subcellular location">
    <subcellularLocation>
        <location evidence="1">Plastid</location>
        <location evidence="1">Chloroplast</location>
    </subcellularLocation>
</comment>
<comment type="miscellaneous">
    <text evidence="1">The basic functional RuBisCO is composed of a large chain homodimer in a 'head-to-tail' conformation. In form I RuBisCO this homodimer is arranged in a barrel-like tetramer with the small subunits forming a tetrameric 'cap' on each end of the 'barrel'.</text>
</comment>
<comment type="similarity">
    <text evidence="1">Belongs to the RuBisCO small chain family.</text>
</comment>
<reference key="1">
    <citation type="submission" date="1997-09" db="EMBL/GenBank/DDBJ databases">
        <authorList>
            <person name="Panico E."/>
            <person name="Baysdorfer C."/>
        </authorList>
    </citation>
    <scope>NUCLEOTIDE SEQUENCE [MRNA]</scope>
</reference>
<gene>
    <name evidence="1" type="primary">RBCS5</name>
</gene>
<sequence length="179" mass="19508">MASSATMLSSVATAACAAPAQASMVAPFVGLKSASAFPVTQKTATGLSTLPSNGGRVQCMKVWPIVGLKKFETLSYLPTLSVESLLKQIEYLIRNGWVPCLEFSLEGFVSRDNNKSPGYYDGRYWTMWKLPMFGCTGAAQVVKEAAECKKEYPAAFIRVIGFDNVRQVQCVSFIVEKPE</sequence>
<protein>
    <recommendedName>
        <fullName evidence="1">Ribulose bisphosphate carboxylase small subunit, chloroplastic 5</fullName>
        <shortName evidence="1">RuBisCO small subunit 5</shortName>
    </recommendedName>
</protein>
<dbReference type="EMBL" id="AF031544">
    <property type="protein sequence ID" value="AAB86854.1"/>
    <property type="molecule type" value="mRNA"/>
</dbReference>
<dbReference type="SMR" id="O22645"/>
<dbReference type="GO" id="GO:0009507">
    <property type="term" value="C:chloroplast"/>
    <property type="evidence" value="ECO:0007669"/>
    <property type="project" value="UniProtKB-SubCell"/>
</dbReference>
<dbReference type="GO" id="GO:0016984">
    <property type="term" value="F:ribulose-bisphosphate carboxylase activity"/>
    <property type="evidence" value="ECO:0007669"/>
    <property type="project" value="UniProtKB-UniRule"/>
</dbReference>
<dbReference type="GO" id="GO:0009853">
    <property type="term" value="P:photorespiration"/>
    <property type="evidence" value="ECO:0007669"/>
    <property type="project" value="UniProtKB-KW"/>
</dbReference>
<dbReference type="GO" id="GO:0019253">
    <property type="term" value="P:reductive pentose-phosphate cycle"/>
    <property type="evidence" value="ECO:0007669"/>
    <property type="project" value="UniProtKB-UniRule"/>
</dbReference>
<dbReference type="CDD" id="cd03527">
    <property type="entry name" value="RuBisCO_small"/>
    <property type="match status" value="1"/>
</dbReference>
<dbReference type="FunFam" id="3.30.190.10:FF:000001">
    <property type="entry name" value="Ribulose bisphosphate carboxylase small chain, chloroplastic"/>
    <property type="match status" value="1"/>
</dbReference>
<dbReference type="Gene3D" id="3.30.190.10">
    <property type="entry name" value="Ribulose bisphosphate carboxylase, small subunit"/>
    <property type="match status" value="1"/>
</dbReference>
<dbReference type="HAMAP" id="MF_00859">
    <property type="entry name" value="RuBisCO_S_bact"/>
    <property type="match status" value="1"/>
</dbReference>
<dbReference type="InterPro" id="IPR024681">
    <property type="entry name" value="RuBisCO_ssu"/>
</dbReference>
<dbReference type="InterPro" id="IPR000894">
    <property type="entry name" value="RuBisCO_ssu_dom"/>
</dbReference>
<dbReference type="InterPro" id="IPR024680">
    <property type="entry name" value="RuBisCO_ssu_N"/>
</dbReference>
<dbReference type="InterPro" id="IPR036385">
    <property type="entry name" value="RuBisCO_ssu_sf"/>
</dbReference>
<dbReference type="PANTHER" id="PTHR31262">
    <property type="entry name" value="RIBULOSE BISPHOSPHATE CARBOXYLASE SMALL CHAIN 1, CHLOROPLASTIC"/>
    <property type="match status" value="1"/>
</dbReference>
<dbReference type="PANTHER" id="PTHR31262:SF10">
    <property type="entry name" value="RIBULOSE BISPHOSPHATE CARBOXYLASE SMALL SUBUNIT 1A, CHLOROPLASTIC-RELATED"/>
    <property type="match status" value="1"/>
</dbReference>
<dbReference type="Pfam" id="PF12338">
    <property type="entry name" value="RbcS"/>
    <property type="match status" value="1"/>
</dbReference>
<dbReference type="Pfam" id="PF00101">
    <property type="entry name" value="RuBisCO_small"/>
    <property type="match status" value="1"/>
</dbReference>
<dbReference type="PRINTS" id="PR00152">
    <property type="entry name" value="RUBISCOSMALL"/>
</dbReference>
<dbReference type="SMART" id="SM00961">
    <property type="entry name" value="RuBisCO_small"/>
    <property type="match status" value="1"/>
</dbReference>
<dbReference type="SUPFAM" id="SSF55239">
    <property type="entry name" value="RuBisCO, small subunit"/>
    <property type="match status" value="1"/>
</dbReference>
<name>RBS5_FRIAG</name>
<accession>O22645</accession>
<feature type="transit peptide" description="Chloroplast" evidence="1">
    <location>
        <begin position="1"/>
        <end position="58"/>
    </location>
</feature>
<feature type="chain" id="PRO_0000031503" description="Ribulose bisphosphate carboxylase small subunit, chloroplastic 5" evidence="1">
    <location>
        <begin position="59"/>
        <end position="179"/>
    </location>
</feature>
<keyword id="KW-0113">Calvin cycle</keyword>
<keyword id="KW-0120">Carbon dioxide fixation</keyword>
<keyword id="KW-0150">Chloroplast</keyword>
<keyword id="KW-0601">Photorespiration</keyword>
<keyword id="KW-0602">Photosynthesis</keyword>
<keyword id="KW-0934">Plastid</keyword>
<keyword id="KW-0809">Transit peptide</keyword>
<evidence type="ECO:0000255" key="1">
    <source>
        <dbReference type="HAMAP-Rule" id="MF_00860"/>
    </source>
</evidence>
<organism>
    <name type="scientific">Fritillaria agrestis</name>
    <name type="common">Stinkbells</name>
    <dbReference type="NCBI Taxonomy" id="64177"/>
    <lineage>
        <taxon>Eukaryota</taxon>
        <taxon>Viridiplantae</taxon>
        <taxon>Streptophyta</taxon>
        <taxon>Embryophyta</taxon>
        <taxon>Tracheophyta</taxon>
        <taxon>Spermatophyta</taxon>
        <taxon>Magnoliopsida</taxon>
        <taxon>Liliopsida</taxon>
        <taxon>Liliales</taxon>
        <taxon>Liliaceae</taxon>
        <taxon>Fritillaria</taxon>
    </lineage>
</organism>